<proteinExistence type="evidence at transcript level"/>
<organism>
    <name type="scientific">Arabidopsis thaliana</name>
    <name type="common">Mouse-ear cress</name>
    <dbReference type="NCBI Taxonomy" id="3702"/>
    <lineage>
        <taxon>Eukaryota</taxon>
        <taxon>Viridiplantae</taxon>
        <taxon>Streptophyta</taxon>
        <taxon>Embryophyta</taxon>
        <taxon>Tracheophyta</taxon>
        <taxon>Spermatophyta</taxon>
        <taxon>Magnoliopsida</taxon>
        <taxon>eudicotyledons</taxon>
        <taxon>Gunneridae</taxon>
        <taxon>Pentapetalae</taxon>
        <taxon>rosids</taxon>
        <taxon>malvids</taxon>
        <taxon>Brassicales</taxon>
        <taxon>Brassicaceae</taxon>
        <taxon>Camelineae</taxon>
        <taxon>Arabidopsis</taxon>
    </lineage>
</organism>
<evidence type="ECO:0000250" key="1"/>
<evidence type="ECO:0000250" key="2">
    <source>
        <dbReference type="UniProtKB" id="O48814"/>
    </source>
</evidence>
<evidence type="ECO:0000255" key="3"/>
<evidence type="ECO:0000255" key="4">
    <source>
        <dbReference type="PROSITE-ProRule" id="PRU00159"/>
    </source>
</evidence>
<evidence type="ECO:0000255" key="5">
    <source>
        <dbReference type="PROSITE-ProRule" id="PRU10027"/>
    </source>
</evidence>
<evidence type="ECO:0000269" key="6">
    <source>
    </source>
</evidence>
<evidence type="ECO:0000305" key="7"/>
<accession>Q8GXQ3</accession>
<accession>Q9S9M6</accession>
<keyword id="KW-0067">ATP-binding</keyword>
<keyword id="KW-1015">Disulfide bond</keyword>
<keyword id="KW-0325">Glycoprotein</keyword>
<keyword id="KW-0418">Kinase</keyword>
<keyword id="KW-0472">Membrane</keyword>
<keyword id="KW-0547">Nucleotide-binding</keyword>
<keyword id="KW-0597">Phosphoprotein</keyword>
<keyword id="KW-1185">Reference proteome</keyword>
<keyword id="KW-0723">Serine/threonine-protein kinase</keyword>
<keyword id="KW-0732">Signal</keyword>
<keyword id="KW-0808">Transferase</keyword>
<keyword id="KW-0812">Transmembrane</keyword>
<keyword id="KW-1133">Transmembrane helix</keyword>
<name>WAKLF_ARATH</name>
<protein>
    <recommendedName>
        <fullName>Wall-associated receptor kinase-like 6</fullName>
        <ecNumber>2.7.11.-</ecNumber>
    </recommendedName>
</protein>
<gene>
    <name type="primary">WAKL6</name>
    <name type="ordered locus">At1g16110</name>
    <name type="ORF">T24D18.19</name>
    <name type="ORF">T24D18_30</name>
</gene>
<comment type="function">
    <text>Serine/threonine-protein kinase that may function as a signaling receptor of extracellular matrix component.</text>
</comment>
<comment type="catalytic activity">
    <reaction>
        <text>L-seryl-[protein] + ATP = O-phospho-L-seryl-[protein] + ADP + H(+)</text>
        <dbReference type="Rhea" id="RHEA:17989"/>
        <dbReference type="Rhea" id="RHEA-COMP:9863"/>
        <dbReference type="Rhea" id="RHEA-COMP:11604"/>
        <dbReference type="ChEBI" id="CHEBI:15378"/>
        <dbReference type="ChEBI" id="CHEBI:29999"/>
        <dbReference type="ChEBI" id="CHEBI:30616"/>
        <dbReference type="ChEBI" id="CHEBI:83421"/>
        <dbReference type="ChEBI" id="CHEBI:456216"/>
    </reaction>
</comment>
<comment type="catalytic activity">
    <reaction>
        <text>L-threonyl-[protein] + ATP = O-phospho-L-threonyl-[protein] + ADP + H(+)</text>
        <dbReference type="Rhea" id="RHEA:46608"/>
        <dbReference type="Rhea" id="RHEA-COMP:11060"/>
        <dbReference type="Rhea" id="RHEA-COMP:11605"/>
        <dbReference type="ChEBI" id="CHEBI:15378"/>
        <dbReference type="ChEBI" id="CHEBI:30013"/>
        <dbReference type="ChEBI" id="CHEBI:30616"/>
        <dbReference type="ChEBI" id="CHEBI:61977"/>
        <dbReference type="ChEBI" id="CHEBI:456216"/>
    </reaction>
</comment>
<comment type="subcellular location">
    <subcellularLocation>
        <location evidence="6">Membrane</location>
        <topology evidence="6">Single-pass type I membrane protein</topology>
    </subcellularLocation>
</comment>
<comment type="tissue specificity">
    <text evidence="6">Slightly expressed in the whole plant.</text>
</comment>
<comment type="induction">
    <text evidence="6">Induced by INA.</text>
</comment>
<comment type="domain">
    <text>The EGF-like region is specific to this family of proteins and seems to consist of the C-terminal of an EGF-like domain fused to the N-terminal of another one.</text>
</comment>
<comment type="similarity">
    <text evidence="4">Belongs to the protein kinase superfamily. Ser/Thr protein kinase family.</text>
</comment>
<comment type="sequence caution" evidence="7">
    <conflict type="erroneous gene model prediction">
        <sequence resource="EMBL-CDS" id="AAF18506"/>
    </conflict>
</comment>
<dbReference type="EC" id="2.7.11.-"/>
<dbReference type="EMBL" id="AC010924">
    <property type="protein sequence ID" value="AAF18506.1"/>
    <property type="status" value="ALT_SEQ"/>
    <property type="molecule type" value="Genomic_DNA"/>
</dbReference>
<dbReference type="EMBL" id="CP002684">
    <property type="protein sequence ID" value="AEE29410.1"/>
    <property type="molecule type" value="Genomic_DNA"/>
</dbReference>
<dbReference type="EMBL" id="AK118105">
    <property type="protein sequence ID" value="BAC42733.1"/>
    <property type="molecule type" value="mRNA"/>
</dbReference>
<dbReference type="PIR" id="G86295">
    <property type="entry name" value="G86295"/>
</dbReference>
<dbReference type="RefSeq" id="NP_173062.1">
    <property type="nucleotide sequence ID" value="NM_101478.3"/>
</dbReference>
<dbReference type="SMR" id="Q8GXQ3"/>
<dbReference type="FunCoup" id="Q8GXQ3">
    <property type="interactions" value="43"/>
</dbReference>
<dbReference type="STRING" id="3702.Q8GXQ3"/>
<dbReference type="GlyCosmos" id="Q8GXQ3">
    <property type="glycosylation" value="7 sites, No reported glycans"/>
</dbReference>
<dbReference type="GlyGen" id="Q8GXQ3">
    <property type="glycosylation" value="8 sites"/>
</dbReference>
<dbReference type="PaxDb" id="3702-AT1G16110.1"/>
<dbReference type="EnsemblPlants" id="AT1G16110.1">
    <property type="protein sequence ID" value="AT1G16110.1"/>
    <property type="gene ID" value="AT1G16110"/>
</dbReference>
<dbReference type="GeneID" id="838180"/>
<dbReference type="Gramene" id="AT1G16110.1">
    <property type="protein sequence ID" value="AT1G16110.1"/>
    <property type="gene ID" value="AT1G16110"/>
</dbReference>
<dbReference type="KEGG" id="ath:AT1G16110"/>
<dbReference type="Araport" id="AT1G16110"/>
<dbReference type="TAIR" id="AT1G16110">
    <property type="gene designation" value="WAKL6"/>
</dbReference>
<dbReference type="eggNOG" id="ENOG502RMXX">
    <property type="taxonomic scope" value="Eukaryota"/>
</dbReference>
<dbReference type="HOGENOM" id="CLU_000288_43_5_1"/>
<dbReference type="InParanoid" id="Q8GXQ3"/>
<dbReference type="OMA" id="CYCNYGY"/>
<dbReference type="PRO" id="PR:Q8GXQ3"/>
<dbReference type="Proteomes" id="UP000006548">
    <property type="component" value="Chromosome 1"/>
</dbReference>
<dbReference type="ExpressionAtlas" id="Q8GXQ3">
    <property type="expression patterns" value="baseline and differential"/>
</dbReference>
<dbReference type="GO" id="GO:0016020">
    <property type="term" value="C:membrane"/>
    <property type="evidence" value="ECO:0007669"/>
    <property type="project" value="UniProtKB-SubCell"/>
</dbReference>
<dbReference type="GO" id="GO:0009505">
    <property type="term" value="C:plant-type cell wall"/>
    <property type="evidence" value="ECO:0000314"/>
    <property type="project" value="TAIR"/>
</dbReference>
<dbReference type="GO" id="GO:0005524">
    <property type="term" value="F:ATP binding"/>
    <property type="evidence" value="ECO:0007669"/>
    <property type="project" value="UniProtKB-KW"/>
</dbReference>
<dbReference type="GO" id="GO:0030247">
    <property type="term" value="F:polysaccharide binding"/>
    <property type="evidence" value="ECO:0007669"/>
    <property type="project" value="InterPro"/>
</dbReference>
<dbReference type="GO" id="GO:0106310">
    <property type="term" value="F:protein serine kinase activity"/>
    <property type="evidence" value="ECO:0007669"/>
    <property type="project" value="RHEA"/>
</dbReference>
<dbReference type="GO" id="GO:0004674">
    <property type="term" value="F:protein serine/threonine kinase activity"/>
    <property type="evidence" value="ECO:0007669"/>
    <property type="project" value="UniProtKB-KW"/>
</dbReference>
<dbReference type="GO" id="GO:0007166">
    <property type="term" value="P:cell surface receptor signaling pathway"/>
    <property type="evidence" value="ECO:0007669"/>
    <property type="project" value="InterPro"/>
</dbReference>
<dbReference type="CDD" id="cd00054">
    <property type="entry name" value="EGF_CA"/>
    <property type="match status" value="1"/>
</dbReference>
<dbReference type="FunFam" id="3.30.200.20:FF:000043">
    <property type="entry name" value="Wall-associated receptor kinase 2"/>
    <property type="match status" value="1"/>
</dbReference>
<dbReference type="FunFam" id="1.10.510.10:FF:001550">
    <property type="entry name" value="Wall-associated receptor kinase-like 6"/>
    <property type="match status" value="1"/>
</dbReference>
<dbReference type="Gene3D" id="2.10.25.10">
    <property type="entry name" value="Laminin"/>
    <property type="match status" value="1"/>
</dbReference>
<dbReference type="Gene3D" id="3.30.200.20">
    <property type="entry name" value="Phosphorylase Kinase, domain 1"/>
    <property type="match status" value="1"/>
</dbReference>
<dbReference type="Gene3D" id="1.10.510.10">
    <property type="entry name" value="Transferase(Phosphotransferase) domain 1"/>
    <property type="match status" value="1"/>
</dbReference>
<dbReference type="InterPro" id="IPR011009">
    <property type="entry name" value="Kinase-like_dom_sf"/>
</dbReference>
<dbReference type="InterPro" id="IPR000719">
    <property type="entry name" value="Prot_kinase_dom"/>
</dbReference>
<dbReference type="InterPro" id="IPR008271">
    <property type="entry name" value="Ser/Thr_kinase_AS"/>
</dbReference>
<dbReference type="InterPro" id="IPR013695">
    <property type="entry name" value="WAK"/>
</dbReference>
<dbReference type="InterPro" id="IPR045274">
    <property type="entry name" value="WAK-like"/>
</dbReference>
<dbReference type="InterPro" id="IPR025287">
    <property type="entry name" value="WAK_GUB"/>
</dbReference>
<dbReference type="PANTHER" id="PTHR27005:SF471">
    <property type="entry name" value="WALL-ASSOCIATED RECEPTOR KINASE-LIKE 1-RELATED"/>
    <property type="match status" value="1"/>
</dbReference>
<dbReference type="PANTHER" id="PTHR27005">
    <property type="entry name" value="WALL-ASSOCIATED RECEPTOR KINASE-LIKE 21"/>
    <property type="match status" value="1"/>
</dbReference>
<dbReference type="Pfam" id="PF13947">
    <property type="entry name" value="GUB_WAK_bind"/>
    <property type="match status" value="1"/>
</dbReference>
<dbReference type="Pfam" id="PF00069">
    <property type="entry name" value="Pkinase"/>
    <property type="match status" value="1"/>
</dbReference>
<dbReference type="Pfam" id="PF08488">
    <property type="entry name" value="WAK"/>
    <property type="match status" value="1"/>
</dbReference>
<dbReference type="SMART" id="SM00220">
    <property type="entry name" value="S_TKc"/>
    <property type="match status" value="1"/>
</dbReference>
<dbReference type="SUPFAM" id="SSF56112">
    <property type="entry name" value="Protein kinase-like (PK-like)"/>
    <property type="match status" value="1"/>
</dbReference>
<dbReference type="PROSITE" id="PS50011">
    <property type="entry name" value="PROTEIN_KINASE_DOM"/>
    <property type="match status" value="1"/>
</dbReference>
<dbReference type="PROSITE" id="PS00108">
    <property type="entry name" value="PROTEIN_KINASE_ST"/>
    <property type="match status" value="1"/>
</dbReference>
<feature type="signal peptide" evidence="3">
    <location>
        <begin position="1"/>
        <end position="28"/>
    </location>
</feature>
<feature type="chain" id="PRO_0000253310" description="Wall-associated receptor kinase-like 6">
    <location>
        <begin position="29"/>
        <end position="642"/>
    </location>
</feature>
<feature type="topological domain" description="Extracellular" evidence="3">
    <location>
        <begin position="29"/>
        <end position="357"/>
    </location>
</feature>
<feature type="transmembrane region" description="Helical" evidence="3">
    <location>
        <begin position="358"/>
        <end position="378"/>
    </location>
</feature>
<feature type="topological domain" description="Cytoplasmic" evidence="3">
    <location>
        <begin position="379"/>
        <end position="642"/>
    </location>
</feature>
<feature type="domain" description="Protein kinase" evidence="4">
    <location>
        <begin position="432"/>
        <end position="642"/>
    </location>
</feature>
<feature type="region of interest" description="Atypical EGF-like">
    <location>
        <begin position="289"/>
        <end position="346"/>
    </location>
</feature>
<feature type="active site" description="Proton acceptor" evidence="4 5">
    <location>
        <position position="559"/>
    </location>
</feature>
<feature type="binding site" evidence="4">
    <location>
        <begin position="438"/>
        <end position="446"/>
    </location>
    <ligand>
        <name>ATP</name>
        <dbReference type="ChEBI" id="CHEBI:30616"/>
    </ligand>
</feature>
<feature type="binding site" evidence="4">
    <location>
        <position position="460"/>
    </location>
    <ligand>
        <name>ATP</name>
        <dbReference type="ChEBI" id="CHEBI:30616"/>
    </ligand>
</feature>
<feature type="modified residue" description="Phosphotyrosine" evidence="2">
    <location>
        <position position="505"/>
    </location>
</feature>
<feature type="modified residue" description="Phosphothreonine" evidence="2">
    <location>
        <position position="593"/>
    </location>
</feature>
<feature type="modified residue" description="Phosphothreonine" evidence="2">
    <location>
        <position position="598"/>
    </location>
</feature>
<feature type="modified residue" description="Phosphotyrosine" evidence="2">
    <location>
        <position position="606"/>
    </location>
</feature>
<feature type="glycosylation site" description="N-linked (GlcNAc...) asparagine" evidence="3">
    <location>
        <position position="37"/>
    </location>
</feature>
<feature type="glycosylation site" description="N-linked (GlcNAc...) asparagine" evidence="3">
    <location>
        <position position="72"/>
    </location>
</feature>
<feature type="glycosylation site" description="N-linked (GlcNAc...) asparagine" evidence="3">
    <location>
        <position position="95"/>
    </location>
</feature>
<feature type="glycosylation site" description="N-linked (GlcNAc...) asparagine" evidence="3">
    <location>
        <position position="137"/>
    </location>
</feature>
<feature type="glycosylation site" description="N-linked (GlcNAc...) asparagine" evidence="3">
    <location>
        <position position="216"/>
    </location>
</feature>
<feature type="glycosylation site" description="N-linked (GlcNAc...) asparagine" evidence="3">
    <location>
        <position position="240"/>
    </location>
</feature>
<feature type="glycosylation site" description="N-linked (GlcNAc...) asparagine" evidence="3">
    <location>
        <position position="276"/>
    </location>
</feature>
<feature type="disulfide bond" evidence="1">
    <location>
        <begin position="291"/>
        <end position="304"/>
    </location>
</feature>
<feature type="disulfide bond" evidence="1">
    <location>
        <begin position="326"/>
        <end position="337"/>
    </location>
</feature>
<feature type="disulfide bond" evidence="1">
    <location>
        <begin position="332"/>
        <end position="346"/>
    </location>
</feature>
<feature type="sequence conflict" description="In Ref. 3; BAC42733." evidence="7" ref="3">
    <original>E</original>
    <variation>G</variation>
    <location>
        <position position="497"/>
    </location>
</feature>
<sequence>MKKTKTYQVFCIAALSVLTLQLINGSSAATPPPPNSNSSTSCNRACGGVSIPFPFGIGKDCYLNGWYEVICNTSTSGSSGTTVPFLSRINSEVVNISLPDGKKLYGVVHIKGPVTSLGCSSSSSSSQVSEMSLPNLNVTGRGSPYFLTDENCLVMVGCGTKALMKDIESEILGCESSCEDSKSSEEVTNSKCDGYKCCQARIPLERPQVIGINIENTSATRGKEGCSVAFLTNKRYAPMNVTEPEQFHAGGYAVVELGWYFDTSDSRYRNPLGCRNMTRYSSYSSFDKCSCEYDYFSGMSYRICYCNYGYTGNPYLRHGCIDIDECEGHHNCGEGTCVNMPGTHSCEPKITKPEKASVLQGVLISLGVLLFVLGILGLYKFIKKRTRIIRNKNFFKRNGGLLLKQQLITKNGNVDMSRIFSSKELKKATDNFSMNRVLGQGGQGTVYKGMLAEGRIVAVKRSKVVGEGKMEEFINEVVLLSQINHRNIVKLLGCCLETEVPVLVYEYIPNGDLFKRLHEKSESNDYTMTWEVRLRIAIEIAGALSYMHSAASIPIYHRDIKTTNILLDEKYRAKVSDFGTSRSITIAQTHLTTLVAGTFGYMDPEYFLSSQYTDKSDVYSFGVVLVELITGEKPLSRKRIGN</sequence>
<reference key="1">
    <citation type="journal article" date="2000" name="Nature">
        <title>Sequence and analysis of chromosome 1 of the plant Arabidopsis thaliana.</title>
        <authorList>
            <person name="Theologis A."/>
            <person name="Ecker J.R."/>
            <person name="Palm C.J."/>
            <person name="Federspiel N.A."/>
            <person name="Kaul S."/>
            <person name="White O."/>
            <person name="Alonso J."/>
            <person name="Altafi H."/>
            <person name="Araujo R."/>
            <person name="Bowman C.L."/>
            <person name="Brooks S.Y."/>
            <person name="Buehler E."/>
            <person name="Chan A."/>
            <person name="Chao Q."/>
            <person name="Chen H."/>
            <person name="Cheuk R.F."/>
            <person name="Chin C.W."/>
            <person name="Chung M.K."/>
            <person name="Conn L."/>
            <person name="Conway A.B."/>
            <person name="Conway A.R."/>
            <person name="Creasy T.H."/>
            <person name="Dewar K."/>
            <person name="Dunn P."/>
            <person name="Etgu P."/>
            <person name="Feldblyum T.V."/>
            <person name="Feng J.-D."/>
            <person name="Fong B."/>
            <person name="Fujii C.Y."/>
            <person name="Gill J.E."/>
            <person name="Goldsmith A.D."/>
            <person name="Haas B."/>
            <person name="Hansen N.F."/>
            <person name="Hughes B."/>
            <person name="Huizar L."/>
            <person name="Hunter J.L."/>
            <person name="Jenkins J."/>
            <person name="Johnson-Hopson C."/>
            <person name="Khan S."/>
            <person name="Khaykin E."/>
            <person name="Kim C.J."/>
            <person name="Koo H.L."/>
            <person name="Kremenetskaia I."/>
            <person name="Kurtz D.B."/>
            <person name="Kwan A."/>
            <person name="Lam B."/>
            <person name="Langin-Hooper S."/>
            <person name="Lee A."/>
            <person name="Lee J.M."/>
            <person name="Lenz C.A."/>
            <person name="Li J.H."/>
            <person name="Li Y.-P."/>
            <person name="Lin X."/>
            <person name="Liu S.X."/>
            <person name="Liu Z.A."/>
            <person name="Luros J.S."/>
            <person name="Maiti R."/>
            <person name="Marziali A."/>
            <person name="Militscher J."/>
            <person name="Miranda M."/>
            <person name="Nguyen M."/>
            <person name="Nierman W.C."/>
            <person name="Osborne B.I."/>
            <person name="Pai G."/>
            <person name="Peterson J."/>
            <person name="Pham P.K."/>
            <person name="Rizzo M."/>
            <person name="Rooney T."/>
            <person name="Rowley D."/>
            <person name="Sakano H."/>
            <person name="Salzberg S.L."/>
            <person name="Schwartz J.R."/>
            <person name="Shinn P."/>
            <person name="Southwick A.M."/>
            <person name="Sun H."/>
            <person name="Tallon L.J."/>
            <person name="Tambunga G."/>
            <person name="Toriumi M.J."/>
            <person name="Town C.D."/>
            <person name="Utterback T."/>
            <person name="Van Aken S."/>
            <person name="Vaysberg M."/>
            <person name="Vysotskaia V.S."/>
            <person name="Walker M."/>
            <person name="Wu D."/>
            <person name="Yu G."/>
            <person name="Fraser C.M."/>
            <person name="Venter J.C."/>
            <person name="Davis R.W."/>
        </authorList>
    </citation>
    <scope>NUCLEOTIDE SEQUENCE [LARGE SCALE GENOMIC DNA]</scope>
    <source>
        <strain>cv. Columbia</strain>
    </source>
</reference>
<reference key="2">
    <citation type="journal article" date="2017" name="Plant J.">
        <title>Araport11: a complete reannotation of the Arabidopsis thaliana reference genome.</title>
        <authorList>
            <person name="Cheng C.Y."/>
            <person name="Krishnakumar V."/>
            <person name="Chan A.P."/>
            <person name="Thibaud-Nissen F."/>
            <person name="Schobel S."/>
            <person name="Town C.D."/>
        </authorList>
    </citation>
    <scope>GENOME REANNOTATION</scope>
    <source>
        <strain>cv. Columbia</strain>
    </source>
</reference>
<reference key="3">
    <citation type="journal article" date="2002" name="Science">
        <title>Functional annotation of a full-length Arabidopsis cDNA collection.</title>
        <authorList>
            <person name="Seki M."/>
            <person name="Narusaka M."/>
            <person name="Kamiya A."/>
            <person name="Ishida J."/>
            <person name="Satou M."/>
            <person name="Sakurai T."/>
            <person name="Nakajima M."/>
            <person name="Enju A."/>
            <person name="Akiyama K."/>
            <person name="Oono Y."/>
            <person name="Muramatsu M."/>
            <person name="Hayashizaki Y."/>
            <person name="Kawai J."/>
            <person name="Carninci P."/>
            <person name="Itoh M."/>
            <person name="Ishii Y."/>
            <person name="Arakawa T."/>
            <person name="Shibata K."/>
            <person name="Shinagawa A."/>
            <person name="Shinozaki K."/>
        </authorList>
    </citation>
    <scope>NUCLEOTIDE SEQUENCE [LARGE SCALE MRNA]</scope>
    <source>
        <strain>cv. Columbia</strain>
    </source>
</reference>
<reference key="4">
    <citation type="journal article" date="2002" name="Plant Physiol.">
        <title>The cell wall-associated kinase (WAK) and WAK-like kinase gene family.</title>
        <authorList>
            <person name="Verica J.A."/>
            <person name="He Z.-H."/>
        </authorList>
    </citation>
    <scope>GENE FAMILY ORGANIZATION</scope>
</reference>
<reference key="5">
    <citation type="journal article" date="2003" name="Plant Physiol.">
        <title>Tissue-specific and developmentally regulated expression of a cluster of tandemly arrayed cell wall-associated kinase-like kinase genes in Arabidopsis.</title>
        <authorList>
            <person name="Verica J.A."/>
            <person name="Chae L."/>
            <person name="Tong H.-Y."/>
            <person name="Ingmire P."/>
            <person name="He Z.-H."/>
        </authorList>
    </citation>
    <scope>TISSUE SPECIFICITY</scope>
    <scope>INDUCTION</scope>
    <scope>SUBCELLULAR LOCATION</scope>
</reference>